<name>GATC_SYNY3</name>
<evidence type="ECO:0000250" key="1"/>
<evidence type="ECO:0000256" key="2">
    <source>
        <dbReference type="SAM" id="MobiDB-lite"/>
    </source>
</evidence>
<evidence type="ECO:0000305" key="3"/>
<proteinExistence type="inferred from homology"/>
<reference key="1">
    <citation type="journal article" date="1995" name="DNA Res.">
        <title>Sequence analysis of the genome of the unicellular cyanobacterium Synechocystis sp. strain PCC6803. I. Sequence features in the 1 Mb region from map positions 64% to 92% of the genome.</title>
        <authorList>
            <person name="Kaneko T."/>
            <person name="Tanaka A."/>
            <person name="Sato S."/>
            <person name="Kotani H."/>
            <person name="Sazuka T."/>
            <person name="Miyajima N."/>
            <person name="Sugiura M."/>
            <person name="Tabata S."/>
        </authorList>
    </citation>
    <scope>NUCLEOTIDE SEQUENCE [LARGE SCALE GENOMIC DNA]</scope>
    <source>
        <strain>ATCC 27184 / PCC 6803 / N-1</strain>
    </source>
</reference>
<reference key="2">
    <citation type="journal article" date="1996" name="DNA Res.">
        <title>Sequence analysis of the genome of the unicellular cyanobacterium Synechocystis sp. strain PCC6803. II. Sequence determination of the entire genome and assignment of potential protein-coding regions.</title>
        <authorList>
            <person name="Kaneko T."/>
            <person name="Sato S."/>
            <person name="Kotani H."/>
            <person name="Tanaka A."/>
            <person name="Asamizu E."/>
            <person name="Nakamura Y."/>
            <person name="Miyajima N."/>
            <person name="Hirosawa M."/>
            <person name="Sugiura M."/>
            <person name="Sasamoto S."/>
            <person name="Kimura T."/>
            <person name="Hosouchi T."/>
            <person name="Matsuno A."/>
            <person name="Muraki A."/>
            <person name="Nakazaki N."/>
            <person name="Naruo K."/>
            <person name="Okumura S."/>
            <person name="Shimpo S."/>
            <person name="Takeuchi C."/>
            <person name="Wada T."/>
            <person name="Watanabe A."/>
            <person name="Yamada M."/>
            <person name="Yasuda M."/>
            <person name="Tabata S."/>
        </authorList>
    </citation>
    <scope>NUCLEOTIDE SEQUENCE [LARGE SCALE GENOMIC DNA]</scope>
    <source>
        <strain>ATCC 27184 / PCC 6803 / Kazusa</strain>
    </source>
</reference>
<sequence>MLDQSQVQKIAHLARLEITPEEESQFASQLSSILDYFDQLNELPTEGVEPTTRAIELSNIVRGDRQISWDGDNAATTRQALLDNAPEPEGDFFRVPRIMGGDEA</sequence>
<comment type="function">
    <text evidence="1">Allows the formation of correctly charged Asn-tRNA(Asn) or Gln-tRNA(Gln) through the transamidation of misacylated Asp-tRNA(Asn) or Glu-tRNA(Gln) in organisms which lack either or both of asparaginyl-tRNA or glutaminyl-tRNA synthetases. The reaction takes place in the presence of glutamine and ATP through an activated phospho-Asp-tRNA(Asn) or phospho-Glu-tRNA(Gln) (By similarity).</text>
</comment>
<comment type="catalytic activity">
    <reaction>
        <text>L-glutamyl-tRNA(Gln) + L-glutamine + ATP + H2O = L-glutaminyl-tRNA(Gln) + L-glutamate + ADP + phosphate + H(+)</text>
        <dbReference type="Rhea" id="RHEA:17521"/>
        <dbReference type="Rhea" id="RHEA-COMP:9681"/>
        <dbReference type="Rhea" id="RHEA-COMP:9684"/>
        <dbReference type="ChEBI" id="CHEBI:15377"/>
        <dbReference type="ChEBI" id="CHEBI:15378"/>
        <dbReference type="ChEBI" id="CHEBI:29985"/>
        <dbReference type="ChEBI" id="CHEBI:30616"/>
        <dbReference type="ChEBI" id="CHEBI:43474"/>
        <dbReference type="ChEBI" id="CHEBI:58359"/>
        <dbReference type="ChEBI" id="CHEBI:78520"/>
        <dbReference type="ChEBI" id="CHEBI:78521"/>
        <dbReference type="ChEBI" id="CHEBI:456216"/>
    </reaction>
</comment>
<comment type="catalytic activity">
    <reaction>
        <text>L-aspartyl-tRNA(Asn) + L-glutamine + ATP + H2O = L-asparaginyl-tRNA(Asn) + L-glutamate + ADP + phosphate + 2 H(+)</text>
        <dbReference type="Rhea" id="RHEA:14513"/>
        <dbReference type="Rhea" id="RHEA-COMP:9674"/>
        <dbReference type="Rhea" id="RHEA-COMP:9677"/>
        <dbReference type="ChEBI" id="CHEBI:15377"/>
        <dbReference type="ChEBI" id="CHEBI:15378"/>
        <dbReference type="ChEBI" id="CHEBI:29985"/>
        <dbReference type="ChEBI" id="CHEBI:30616"/>
        <dbReference type="ChEBI" id="CHEBI:43474"/>
        <dbReference type="ChEBI" id="CHEBI:58359"/>
        <dbReference type="ChEBI" id="CHEBI:78515"/>
        <dbReference type="ChEBI" id="CHEBI:78516"/>
        <dbReference type="ChEBI" id="CHEBI:456216"/>
    </reaction>
</comment>
<comment type="subunit">
    <text evidence="1">Heterotrimer of A, B and C subunits.</text>
</comment>
<comment type="similarity">
    <text evidence="3">Belongs to the GatC family.</text>
</comment>
<organism>
    <name type="scientific">Synechocystis sp. (strain ATCC 27184 / PCC 6803 / Kazusa)</name>
    <dbReference type="NCBI Taxonomy" id="1111708"/>
    <lineage>
        <taxon>Bacteria</taxon>
        <taxon>Bacillati</taxon>
        <taxon>Cyanobacteriota</taxon>
        <taxon>Cyanophyceae</taxon>
        <taxon>Synechococcales</taxon>
        <taxon>Merismopediaceae</taxon>
        <taxon>Synechocystis</taxon>
    </lineage>
</organism>
<gene>
    <name type="primary">gatC</name>
    <name type="ordered locus">slr0033</name>
</gene>
<accession>Q55450</accession>
<protein>
    <recommendedName>
        <fullName>Glutamyl-tRNA(Gln) amidotransferase subunit C</fullName>
        <shortName>Glu-ADT subunit C</shortName>
        <ecNumber>6.3.5.-</ecNumber>
    </recommendedName>
</protein>
<feature type="chain" id="PRO_0000105351" description="Glutamyl-tRNA(Gln) amidotransferase subunit C">
    <location>
        <begin position="1"/>
        <end position="104"/>
    </location>
</feature>
<feature type="region of interest" description="Disordered" evidence="2">
    <location>
        <begin position="85"/>
        <end position="104"/>
    </location>
</feature>
<dbReference type="EC" id="6.3.5.-"/>
<dbReference type="EMBL" id="BA000022">
    <property type="protein sequence ID" value="BAA10793.1"/>
    <property type="molecule type" value="Genomic_DNA"/>
</dbReference>
<dbReference type="PIR" id="S75946">
    <property type="entry name" value="S75946"/>
</dbReference>
<dbReference type="SMR" id="Q55450"/>
<dbReference type="FunCoup" id="Q55450">
    <property type="interactions" value="425"/>
</dbReference>
<dbReference type="STRING" id="1148.gene:10500297"/>
<dbReference type="PaxDb" id="1148-1001306"/>
<dbReference type="EnsemblBacteria" id="BAA10793">
    <property type="protein sequence ID" value="BAA10793"/>
    <property type="gene ID" value="BAA10793"/>
</dbReference>
<dbReference type="KEGG" id="syn:slr0033"/>
<dbReference type="eggNOG" id="COG0721">
    <property type="taxonomic scope" value="Bacteria"/>
</dbReference>
<dbReference type="InParanoid" id="Q55450"/>
<dbReference type="PhylomeDB" id="Q55450"/>
<dbReference type="Proteomes" id="UP000001425">
    <property type="component" value="Chromosome"/>
</dbReference>
<dbReference type="GO" id="GO:0050566">
    <property type="term" value="F:asparaginyl-tRNA synthase (glutamine-hydrolyzing) activity"/>
    <property type="evidence" value="ECO:0007669"/>
    <property type="project" value="RHEA"/>
</dbReference>
<dbReference type="GO" id="GO:0005524">
    <property type="term" value="F:ATP binding"/>
    <property type="evidence" value="ECO:0007669"/>
    <property type="project" value="UniProtKB-KW"/>
</dbReference>
<dbReference type="GO" id="GO:0050567">
    <property type="term" value="F:glutaminyl-tRNA synthase (glutamine-hydrolyzing) activity"/>
    <property type="evidence" value="ECO:0007669"/>
    <property type="project" value="UniProtKB-UniRule"/>
</dbReference>
<dbReference type="GO" id="GO:0070681">
    <property type="term" value="P:glutaminyl-tRNAGln biosynthesis via transamidation"/>
    <property type="evidence" value="ECO:0000318"/>
    <property type="project" value="GO_Central"/>
</dbReference>
<dbReference type="GO" id="GO:0006450">
    <property type="term" value="P:regulation of translational fidelity"/>
    <property type="evidence" value="ECO:0007669"/>
    <property type="project" value="InterPro"/>
</dbReference>
<dbReference type="GO" id="GO:0006412">
    <property type="term" value="P:translation"/>
    <property type="evidence" value="ECO:0007669"/>
    <property type="project" value="UniProtKB-UniRule"/>
</dbReference>
<dbReference type="Gene3D" id="1.10.20.60">
    <property type="entry name" value="Glu-tRNAGln amidotransferase C subunit, N-terminal domain"/>
    <property type="match status" value="1"/>
</dbReference>
<dbReference type="HAMAP" id="MF_00122">
    <property type="entry name" value="GatC"/>
    <property type="match status" value="1"/>
</dbReference>
<dbReference type="InterPro" id="IPR036113">
    <property type="entry name" value="Asp/Glu-ADT_sf_sub_c"/>
</dbReference>
<dbReference type="InterPro" id="IPR003837">
    <property type="entry name" value="GatC"/>
</dbReference>
<dbReference type="NCBIfam" id="TIGR00135">
    <property type="entry name" value="gatC"/>
    <property type="match status" value="1"/>
</dbReference>
<dbReference type="PANTHER" id="PTHR15004">
    <property type="entry name" value="GLUTAMYL-TRNA(GLN) AMIDOTRANSFERASE SUBUNIT C, MITOCHONDRIAL"/>
    <property type="match status" value="1"/>
</dbReference>
<dbReference type="PANTHER" id="PTHR15004:SF0">
    <property type="entry name" value="GLUTAMYL-TRNA(GLN) AMIDOTRANSFERASE SUBUNIT C, MITOCHONDRIAL"/>
    <property type="match status" value="1"/>
</dbReference>
<dbReference type="Pfam" id="PF02686">
    <property type="entry name" value="GatC"/>
    <property type="match status" value="1"/>
</dbReference>
<dbReference type="SUPFAM" id="SSF141000">
    <property type="entry name" value="Glu-tRNAGln amidotransferase C subunit"/>
    <property type="match status" value="1"/>
</dbReference>
<keyword id="KW-0067">ATP-binding</keyword>
<keyword id="KW-0436">Ligase</keyword>
<keyword id="KW-0547">Nucleotide-binding</keyword>
<keyword id="KW-0648">Protein biosynthesis</keyword>
<keyword id="KW-1185">Reference proteome</keyword>